<evidence type="ECO:0000250" key="1"/>
<evidence type="ECO:0000255" key="2"/>
<evidence type="ECO:0000269" key="3">
    <source>
    </source>
</evidence>
<evidence type="ECO:0000305" key="4"/>
<accession>P0C773</accession>
<reference key="1">
    <citation type="journal article" date="1996" name="Proc. Natl. Acad. Sci. U.S.A.">
        <title>The virion glycoproteins of Ebola viruses are encoded in two reading frames and are expressed through transcriptional editing.</title>
        <authorList>
            <person name="Sanchez A."/>
            <person name="Trappier S.G."/>
            <person name="Mahy B.W.J."/>
            <person name="Peters C.J."/>
            <person name="Nichol S.T."/>
        </authorList>
    </citation>
    <scope>NUCLEOTIDE SEQUENCE [GENOMIC RNA]</scope>
    <scope>RNA EDITING</scope>
</reference>
<reference key="2">
    <citation type="submission" date="2003-07" db="EMBL/GenBank/DDBJ databases">
        <authorList>
            <person name="Chain P.S.G."/>
            <person name="Ichou M.A."/>
            <person name="Malfatti S.A."/>
            <person name="Hajjaj A."/>
            <person name="Vergez L.M."/>
            <person name="Paragas J."/>
            <person name="Do L.H."/>
            <person name="Jahrling P.B."/>
            <person name="Smith K.L."/>
            <person name="McCready P.M."/>
            <person name="Ibrahim M.S."/>
        </authorList>
    </citation>
    <scope>NUCLEOTIDE SEQUENCE [GENOMIC RNA]</scope>
    <source>
        <strain>Isolate Chain</strain>
    </source>
</reference>
<proteinExistence type="inferred from homology"/>
<gene>
    <name type="primary">GP</name>
</gene>
<name>VSSGP_EBOZ5</name>
<organismHost>
    <name type="scientific">Epomops franqueti</name>
    <name type="common">Franquet's epauletted fruit bat</name>
    <name type="synonym">Epomophorus franqueti</name>
    <dbReference type="NCBI Taxonomy" id="77231"/>
</organismHost>
<organismHost>
    <name type="scientific">Homo sapiens</name>
    <name type="common">Human</name>
    <dbReference type="NCBI Taxonomy" id="9606"/>
</organismHost>
<organismHost>
    <name type="scientific">Myonycteris torquata</name>
    <name type="common">Little collared fruit bat</name>
    <dbReference type="NCBI Taxonomy" id="77243"/>
</organismHost>
<feature type="signal peptide" evidence="2">
    <location>
        <begin position="1"/>
        <end position="32"/>
    </location>
</feature>
<feature type="chain" id="PRO_0000391497" description="Super small secreted glycoprotein">
    <location>
        <begin position="33"/>
        <end position="298"/>
    </location>
</feature>
<feature type="glycosylation site" description="N-linked (GlcNAc...) asparagine; by host" evidence="2">
    <location>
        <position position="40"/>
    </location>
</feature>
<feature type="glycosylation site" description="N-linked (GlcNAc...) asparagine; by host" evidence="2">
    <location>
        <position position="204"/>
    </location>
</feature>
<feature type="glycosylation site" description="N-linked (GlcNAc...) asparagine; by host" evidence="2">
    <location>
        <position position="228"/>
    </location>
</feature>
<feature type="glycosylation site" description="N-linked (GlcNAc...) asparagine; by host" evidence="2">
    <location>
        <position position="238"/>
    </location>
</feature>
<feature type="glycosylation site" description="N-linked (GlcNAc...) asparagine; by host" evidence="2">
    <location>
        <position position="257"/>
    </location>
</feature>
<feature type="glycosylation site" description="N-linked (GlcNAc...) asparagine; by host" evidence="2">
    <location>
        <position position="268"/>
    </location>
</feature>
<feature type="disulfide bond" description="Interchain" evidence="1">
    <location>
        <position position="53"/>
    </location>
</feature>
<feature type="disulfide bond" evidence="1">
    <location>
        <begin position="108"/>
        <end position="135"/>
    </location>
</feature>
<feature type="disulfide bond" evidence="1">
    <location>
        <begin position="121"/>
        <end position="147"/>
    </location>
</feature>
<organism>
    <name type="scientific">Zaire ebolavirus (strain Kikwit-95)</name>
    <name type="common">ZEBOV</name>
    <name type="synonym">Zaire Ebola virus</name>
    <dbReference type="NCBI Taxonomy" id="128951"/>
    <lineage>
        <taxon>Viruses</taxon>
        <taxon>Riboviria</taxon>
        <taxon>Orthornavirae</taxon>
        <taxon>Negarnaviricota</taxon>
        <taxon>Haploviricotina</taxon>
        <taxon>Monjiviricetes</taxon>
        <taxon>Mononegavirales</taxon>
        <taxon>Filoviridae</taxon>
        <taxon>Orthoebolavirus</taxon>
        <taxon>Orthoebolavirus zairense</taxon>
        <taxon>Zaire ebolavirus</taxon>
    </lineage>
</organism>
<protein>
    <recommendedName>
        <fullName>Super small secreted glycoprotein</fullName>
        <shortName>SsGP</shortName>
    </recommendedName>
</protein>
<keyword id="KW-1015">Disulfide bond</keyword>
<keyword id="KW-0325">Glycoprotein</keyword>
<keyword id="KW-0691">RNA editing</keyword>
<keyword id="KW-0964">Secreted</keyword>
<keyword id="KW-0732">Signal</keyword>
<comment type="subcellular location">
    <subcellularLocation>
        <location evidence="4">Secreted</location>
    </subcellularLocation>
</comment>
<comment type="RNA editing">
    <location>
        <position position="295" evidence="3"/>
    </location>
    <text>Partially edited. RNA editing at this position consists of an insertion of one or two adenine nucleotides. The sequence displayed here is the super small secreted glycoprotein ssGP, derived from the +2A edited RNA. The unedited RNA gives rise to the small secreted glycoprotein sGP (AC P60171), the +1A edited RNA gives rise to the full-length transmembrane glycoprotein GP (AC P87666).</text>
</comment>
<comment type="similarity">
    <text evidence="4">Belongs to the filoviruses glycoprotein family.</text>
</comment>
<sequence length="298" mass="33520">MGVTGILQLPRDRFKRTSFFLWVIILFQRTFSIPLGVIHNSTLQVSDVDKLVCRDKLSSTNQLRSVGLNLEGNGVATDVPSATKRWGFRSGVPPKVVNYEAGEWAENCYNLEIKKPDGSECLPAAPDGIRGFPRCRYVHKVSGTGPCAGDFAFHKEGAFFLYDRLASTVIYRGTTFAEGVVAFLILPQAKKDFFSSHPLREPVNATEDPSSGYYSTTIRYQATGFGTNETEYLFEVDNLTYVQLESRFTPQFLLQLNETIYTSGKRSNTTGKLIWKVNPEIDTTIGEWAFWETKKKPH</sequence>
<dbReference type="EMBL" id="U28077">
    <property type="status" value="NOT_ANNOTATED_CDS"/>
    <property type="molecule type" value="Genomic_RNA"/>
</dbReference>
<dbReference type="EMBL" id="AY354458">
    <property type="status" value="NOT_ANNOTATED_CDS"/>
    <property type="molecule type" value="Genomic_RNA"/>
</dbReference>
<dbReference type="SMR" id="P0C773"/>
<dbReference type="GlyCosmos" id="P0C773">
    <property type="glycosylation" value="6 sites, No reported glycans"/>
</dbReference>
<dbReference type="Proteomes" id="UP000007208">
    <property type="component" value="Genome"/>
</dbReference>
<dbReference type="GO" id="GO:0005576">
    <property type="term" value="C:extracellular region"/>
    <property type="evidence" value="ECO:0007669"/>
    <property type="project" value="UniProtKB-SubCell"/>
</dbReference>
<dbReference type="InterPro" id="IPR002561">
    <property type="entry name" value="GPC_filovir-type_extra_dom"/>
</dbReference>
<dbReference type="Pfam" id="PF01611">
    <property type="entry name" value="Filo_glycop"/>
    <property type="match status" value="1"/>
</dbReference>